<comment type="function">
    <text evidence="1">Catalyzes the ATP-dependent phosphorylation of N-acetyl-L-glutamate.</text>
</comment>
<comment type="catalytic activity">
    <reaction evidence="1">
        <text>N-acetyl-L-glutamate + ATP = N-acetyl-L-glutamyl 5-phosphate + ADP</text>
        <dbReference type="Rhea" id="RHEA:14629"/>
        <dbReference type="ChEBI" id="CHEBI:30616"/>
        <dbReference type="ChEBI" id="CHEBI:44337"/>
        <dbReference type="ChEBI" id="CHEBI:57936"/>
        <dbReference type="ChEBI" id="CHEBI:456216"/>
        <dbReference type="EC" id="2.7.2.8"/>
    </reaction>
</comment>
<comment type="pathway">
    <text evidence="1">Amino-acid biosynthesis; L-arginine biosynthesis; N(2)-acetyl-L-ornithine from L-glutamate: step 2/4.</text>
</comment>
<comment type="subcellular location">
    <subcellularLocation>
        <location evidence="1">Plastid</location>
        <location evidence="1">Chloroplast</location>
    </subcellularLocation>
</comment>
<comment type="similarity">
    <text evidence="1">Belongs to the acetylglutamate kinase family. ArgB subfamily.</text>
</comment>
<accession>P69366</accession>
<accession>P31595</accession>
<gene>
    <name evidence="1" type="primary">argB</name>
</gene>
<evidence type="ECO:0000255" key="1">
    <source>
        <dbReference type="HAMAP-Rule" id="MF_00082"/>
    </source>
</evidence>
<sequence length="283" mass="30449">MLTNTERVKVLSDVTILQKFSSRIIVIKYGGAAMKNQKLKDHVISDLVFLSFIGLRPILVHGGGPEINFWLDQLKILPKFENGVRVTDQPTMDIVEMVLVGRVNKDLVASINKQGGKSVGLSGKDGLLITSRPSDKPNLGFVGEVQNVDTNLLEILINNNYIPVIASVAADKQGQSYNINADTVAGEIAARLNAEKLILLTDTPGILRNASDATTLISHLSIQEARDLTKTAVISGGMIPKVNCCIRSLAQGVASAHILDGRIDHALLLEILTDQGIGSMLVV</sequence>
<keyword id="KW-0028">Amino-acid biosynthesis</keyword>
<keyword id="KW-0055">Arginine biosynthesis</keyword>
<keyword id="KW-0067">ATP-binding</keyword>
<keyword id="KW-0150">Chloroplast</keyword>
<keyword id="KW-0418">Kinase</keyword>
<keyword id="KW-0547">Nucleotide-binding</keyword>
<keyword id="KW-0934">Plastid</keyword>
<keyword id="KW-0808">Transferase</keyword>
<name>ARGB_PORUM</name>
<protein>
    <recommendedName>
        <fullName evidence="1">Acetylglutamate kinase</fullName>
        <ecNumber evidence="1">2.7.2.8</ecNumber>
    </recommendedName>
    <alternativeName>
        <fullName evidence="1">N-acetyl-L-glutamate 5-phosphotransferase</fullName>
    </alternativeName>
    <alternativeName>
        <fullName evidence="1">NAG kinase</fullName>
        <shortName evidence="1">NAGK</shortName>
    </alternativeName>
</protein>
<reference key="1">
    <citation type="journal article" date="1993" name="Curr. Genet.">
        <title>Two amino-acid biosynthetic genes are encoded on the plastid genome of the red alga Porphyra umbilicalis.</title>
        <authorList>
            <person name="Reith M."/>
            <person name="Munholland J.M."/>
        </authorList>
    </citation>
    <scope>NUCLEOTIDE SEQUENCE [GENOMIC DNA]</scope>
</reference>
<geneLocation type="chloroplast"/>
<proteinExistence type="inferred from homology"/>
<feature type="chain" id="PRO_0000112710" description="Acetylglutamate kinase">
    <location>
        <begin position="1"/>
        <end position="283"/>
    </location>
</feature>
<feature type="binding site" evidence="1">
    <location>
        <begin position="63"/>
        <end position="64"/>
    </location>
    <ligand>
        <name>substrate</name>
    </ligand>
</feature>
<feature type="binding site" evidence="1">
    <location>
        <position position="85"/>
    </location>
    <ligand>
        <name>substrate</name>
    </ligand>
</feature>
<feature type="binding site" evidence="1">
    <location>
        <position position="178"/>
    </location>
    <ligand>
        <name>substrate</name>
    </ligand>
</feature>
<feature type="site" description="Transition state stabilizer" evidence="1">
    <location>
        <position position="28"/>
    </location>
</feature>
<feature type="site" description="Transition state stabilizer" evidence="1">
    <location>
        <position position="241"/>
    </location>
</feature>
<dbReference type="EC" id="2.7.2.8" evidence="1"/>
<dbReference type="EMBL" id="M94625">
    <property type="protein sequence ID" value="AAA03053.1"/>
    <property type="molecule type" value="Unassigned_DNA"/>
</dbReference>
<dbReference type="PIR" id="S28959">
    <property type="entry name" value="S28959"/>
</dbReference>
<dbReference type="SMR" id="P69366"/>
<dbReference type="OrthoDB" id="438291at2759"/>
<dbReference type="UniPathway" id="UPA00068">
    <property type="reaction ID" value="UER00107"/>
</dbReference>
<dbReference type="GO" id="GO:0009507">
    <property type="term" value="C:chloroplast"/>
    <property type="evidence" value="ECO:0007669"/>
    <property type="project" value="UniProtKB-SubCell"/>
</dbReference>
<dbReference type="GO" id="GO:0003991">
    <property type="term" value="F:acetylglutamate kinase activity"/>
    <property type="evidence" value="ECO:0007669"/>
    <property type="project" value="UniProtKB-UniRule"/>
</dbReference>
<dbReference type="GO" id="GO:0005524">
    <property type="term" value="F:ATP binding"/>
    <property type="evidence" value="ECO:0007669"/>
    <property type="project" value="UniProtKB-UniRule"/>
</dbReference>
<dbReference type="GO" id="GO:0042450">
    <property type="term" value="P:arginine biosynthetic process via ornithine"/>
    <property type="evidence" value="ECO:0007669"/>
    <property type="project" value="UniProtKB-UniRule"/>
</dbReference>
<dbReference type="GO" id="GO:0006526">
    <property type="term" value="P:L-arginine biosynthetic process"/>
    <property type="evidence" value="ECO:0007669"/>
    <property type="project" value="UniProtKB-UniPathway"/>
</dbReference>
<dbReference type="CDD" id="cd04250">
    <property type="entry name" value="AAK_NAGK-C"/>
    <property type="match status" value="1"/>
</dbReference>
<dbReference type="FunFam" id="3.40.1160.10:FF:000004">
    <property type="entry name" value="Acetylglutamate kinase"/>
    <property type="match status" value="1"/>
</dbReference>
<dbReference type="Gene3D" id="3.40.1160.10">
    <property type="entry name" value="Acetylglutamate kinase-like"/>
    <property type="match status" value="1"/>
</dbReference>
<dbReference type="HAMAP" id="MF_00082">
    <property type="entry name" value="ArgB"/>
    <property type="match status" value="1"/>
</dbReference>
<dbReference type="InterPro" id="IPR036393">
    <property type="entry name" value="AceGlu_kinase-like_sf"/>
</dbReference>
<dbReference type="InterPro" id="IPR004662">
    <property type="entry name" value="AcgluKinase_fam"/>
</dbReference>
<dbReference type="InterPro" id="IPR037528">
    <property type="entry name" value="ArgB"/>
</dbReference>
<dbReference type="InterPro" id="IPR001048">
    <property type="entry name" value="Asp/Glu/Uridylate_kinase"/>
</dbReference>
<dbReference type="InterPro" id="IPR001057">
    <property type="entry name" value="Glu/AcGlu_kinase"/>
</dbReference>
<dbReference type="InterPro" id="IPR041727">
    <property type="entry name" value="NAGK-C"/>
</dbReference>
<dbReference type="NCBIfam" id="TIGR00761">
    <property type="entry name" value="argB"/>
    <property type="match status" value="1"/>
</dbReference>
<dbReference type="PANTHER" id="PTHR23342">
    <property type="entry name" value="N-ACETYLGLUTAMATE SYNTHASE"/>
    <property type="match status" value="1"/>
</dbReference>
<dbReference type="PANTHER" id="PTHR23342:SF0">
    <property type="entry name" value="N-ACETYLGLUTAMATE SYNTHASE, MITOCHONDRIAL"/>
    <property type="match status" value="1"/>
</dbReference>
<dbReference type="Pfam" id="PF00696">
    <property type="entry name" value="AA_kinase"/>
    <property type="match status" value="1"/>
</dbReference>
<dbReference type="PIRSF" id="PIRSF000728">
    <property type="entry name" value="NAGK"/>
    <property type="match status" value="1"/>
</dbReference>
<dbReference type="PRINTS" id="PR00474">
    <property type="entry name" value="GLU5KINASE"/>
</dbReference>
<dbReference type="SUPFAM" id="SSF53633">
    <property type="entry name" value="Carbamate kinase-like"/>
    <property type="match status" value="1"/>
</dbReference>
<organism>
    <name type="scientific">Porphyra umbilicalis</name>
    <name type="common">Purple laver</name>
    <name type="synonym">Red alga</name>
    <dbReference type="NCBI Taxonomy" id="2786"/>
    <lineage>
        <taxon>Eukaryota</taxon>
        <taxon>Rhodophyta</taxon>
        <taxon>Bangiophyceae</taxon>
        <taxon>Bangiales</taxon>
        <taxon>Bangiaceae</taxon>
        <taxon>Porphyra</taxon>
    </lineage>
</organism>